<accession>Q3Z0K4</accession>
<dbReference type="EC" id="2.4.2.21" evidence="1"/>
<dbReference type="EMBL" id="CP000038">
    <property type="protein sequence ID" value="AAZ88708.1"/>
    <property type="molecule type" value="Genomic_DNA"/>
</dbReference>
<dbReference type="RefSeq" id="WP_001193807.1">
    <property type="nucleotide sequence ID" value="NC_007384.1"/>
</dbReference>
<dbReference type="SMR" id="Q3Z0K4"/>
<dbReference type="GeneID" id="93775193"/>
<dbReference type="KEGG" id="ssn:SSON_2052"/>
<dbReference type="HOGENOM" id="CLU_002982_0_0_6"/>
<dbReference type="UniPathway" id="UPA00061">
    <property type="reaction ID" value="UER00516"/>
</dbReference>
<dbReference type="Proteomes" id="UP000002529">
    <property type="component" value="Chromosome"/>
</dbReference>
<dbReference type="GO" id="GO:0008939">
    <property type="term" value="F:nicotinate-nucleotide-dimethylbenzimidazole phosphoribosyltransferase activity"/>
    <property type="evidence" value="ECO:0007669"/>
    <property type="project" value="UniProtKB-UniRule"/>
</dbReference>
<dbReference type="GO" id="GO:0009236">
    <property type="term" value="P:cobalamin biosynthetic process"/>
    <property type="evidence" value="ECO:0007669"/>
    <property type="project" value="UniProtKB-KW"/>
</dbReference>
<dbReference type="CDD" id="cd02439">
    <property type="entry name" value="DMB-PRT_CobT"/>
    <property type="match status" value="1"/>
</dbReference>
<dbReference type="FunFam" id="1.10.1610.10:FF:000001">
    <property type="entry name" value="Nicotinate-nucleotide--dimethylbenzimidazole phosphoribosyltransferase"/>
    <property type="match status" value="1"/>
</dbReference>
<dbReference type="FunFam" id="3.40.50.10210:FF:000001">
    <property type="entry name" value="Nicotinate-nucleotide--dimethylbenzimidazole phosphoribosyltransferase"/>
    <property type="match status" value="1"/>
</dbReference>
<dbReference type="Gene3D" id="1.10.1610.10">
    <property type="match status" value="1"/>
</dbReference>
<dbReference type="Gene3D" id="3.40.50.10210">
    <property type="match status" value="1"/>
</dbReference>
<dbReference type="HAMAP" id="MF_00230">
    <property type="entry name" value="CobT"/>
    <property type="match status" value="1"/>
</dbReference>
<dbReference type="InterPro" id="IPR003200">
    <property type="entry name" value="Nict_dMeBzImd_PRibTrfase"/>
</dbReference>
<dbReference type="InterPro" id="IPR017846">
    <property type="entry name" value="Nict_dMeBzImd_PRibTrfase_bact"/>
</dbReference>
<dbReference type="InterPro" id="IPR023195">
    <property type="entry name" value="Nict_dMeBzImd_PRibTrfase_N"/>
</dbReference>
<dbReference type="InterPro" id="IPR036087">
    <property type="entry name" value="Nict_dMeBzImd_PRibTrfase_sf"/>
</dbReference>
<dbReference type="NCBIfam" id="TIGR03160">
    <property type="entry name" value="cobT_DBIPRT"/>
    <property type="match status" value="1"/>
</dbReference>
<dbReference type="NCBIfam" id="NF000996">
    <property type="entry name" value="PRK00105.1"/>
    <property type="match status" value="1"/>
</dbReference>
<dbReference type="PANTHER" id="PTHR43463">
    <property type="entry name" value="NICOTINATE-NUCLEOTIDE--DIMETHYLBENZIMIDAZOLE PHOSPHORIBOSYLTRANSFERASE"/>
    <property type="match status" value="1"/>
</dbReference>
<dbReference type="PANTHER" id="PTHR43463:SF1">
    <property type="entry name" value="NICOTINATE-NUCLEOTIDE--DIMETHYLBENZIMIDAZOLE PHOSPHORIBOSYLTRANSFERASE"/>
    <property type="match status" value="1"/>
</dbReference>
<dbReference type="Pfam" id="PF02277">
    <property type="entry name" value="DBI_PRT"/>
    <property type="match status" value="1"/>
</dbReference>
<dbReference type="SUPFAM" id="SSF52733">
    <property type="entry name" value="Nicotinate mononucleotide:5,6-dimethylbenzimidazole phosphoribosyltransferase (CobT)"/>
    <property type="match status" value="1"/>
</dbReference>
<reference key="1">
    <citation type="journal article" date="2005" name="Nucleic Acids Res.">
        <title>Genome dynamics and diversity of Shigella species, the etiologic agents of bacillary dysentery.</title>
        <authorList>
            <person name="Yang F."/>
            <person name="Yang J."/>
            <person name="Zhang X."/>
            <person name="Chen L."/>
            <person name="Jiang Y."/>
            <person name="Yan Y."/>
            <person name="Tang X."/>
            <person name="Wang J."/>
            <person name="Xiong Z."/>
            <person name="Dong J."/>
            <person name="Xue Y."/>
            <person name="Zhu Y."/>
            <person name="Xu X."/>
            <person name="Sun L."/>
            <person name="Chen S."/>
            <person name="Nie H."/>
            <person name="Peng J."/>
            <person name="Xu J."/>
            <person name="Wang Y."/>
            <person name="Yuan Z."/>
            <person name="Wen Y."/>
            <person name="Yao Z."/>
            <person name="Shen Y."/>
            <person name="Qiang B."/>
            <person name="Hou Y."/>
            <person name="Yu J."/>
            <person name="Jin Q."/>
        </authorList>
    </citation>
    <scope>NUCLEOTIDE SEQUENCE [LARGE SCALE GENOMIC DNA]</scope>
    <source>
        <strain>Ss046</strain>
    </source>
</reference>
<comment type="function">
    <text evidence="1">Catalyzes the synthesis of alpha-ribazole-5'-phosphate from nicotinate mononucleotide (NAMN) and 5,6-dimethylbenzimidazole (DMB).</text>
</comment>
<comment type="catalytic activity">
    <reaction evidence="1">
        <text>5,6-dimethylbenzimidazole + nicotinate beta-D-ribonucleotide = alpha-ribazole 5'-phosphate + nicotinate + H(+)</text>
        <dbReference type="Rhea" id="RHEA:11196"/>
        <dbReference type="ChEBI" id="CHEBI:15378"/>
        <dbReference type="ChEBI" id="CHEBI:15890"/>
        <dbReference type="ChEBI" id="CHEBI:32544"/>
        <dbReference type="ChEBI" id="CHEBI:57502"/>
        <dbReference type="ChEBI" id="CHEBI:57918"/>
        <dbReference type="EC" id="2.4.2.21"/>
    </reaction>
</comment>
<comment type="pathway">
    <text evidence="1">Nucleoside biosynthesis; alpha-ribazole biosynthesis; alpha-ribazole from 5,6-dimethylbenzimidazole: step 1/2.</text>
</comment>
<comment type="subunit">
    <text evidence="1">Homodimer.</text>
</comment>
<comment type="similarity">
    <text evidence="1">Belongs to the CobT family.</text>
</comment>
<name>COBT_SHISS</name>
<evidence type="ECO:0000255" key="1">
    <source>
        <dbReference type="HAMAP-Rule" id="MF_00230"/>
    </source>
</evidence>
<proteinExistence type="inferred from homology"/>
<feature type="chain" id="PRO_1000021636" description="Nicotinate-nucleotide--dimethylbenzimidazole phosphoribosyltransferase">
    <location>
        <begin position="1"/>
        <end position="359"/>
    </location>
</feature>
<feature type="active site" description="Proton acceptor" evidence="1">
    <location>
        <position position="318"/>
    </location>
</feature>
<sequence length="359" mass="36863">MQTLADLLNTIPAIDPAAMSRAQRHIDGLLKPVGSLGRLEALAIQLAGMPGLNGVPHVGKKAVLVMCADHGVWEEGVAISPKEVTAIQAENMTRGTTGVCVLAAQAGANVYVIDVGIDTAEPIPGLINMRVARGSGNIASAPAMSRHLAEKLLLDVICYTRELAKNGVTLFGVGDLGMANTTPAAAIVSTITGRAPEEVVGIGANLPTDKLANKIDVVRRAITLNQPNPQDGVDVLAKVGGFDLVGMAGVMLGAASCGLPVLLDGFLSYAAALAACQMSPAIKPYLIPSHLSAEKGARIALSHLGLEPYLNMEMRLGEGSGAALAMPIIEAACAIYNNMGELAASNIVLPGNTTSDLNS</sequence>
<protein>
    <recommendedName>
        <fullName evidence="1">Nicotinate-nucleotide--dimethylbenzimidazole phosphoribosyltransferase</fullName>
        <shortName evidence="1">NN:DBI PRT</shortName>
        <ecNumber evidence="1">2.4.2.21</ecNumber>
    </recommendedName>
    <alternativeName>
        <fullName evidence="1">N(1)-alpha-phosphoribosyltransferase</fullName>
    </alternativeName>
</protein>
<keyword id="KW-0169">Cobalamin biosynthesis</keyword>
<keyword id="KW-0328">Glycosyltransferase</keyword>
<keyword id="KW-1185">Reference proteome</keyword>
<keyword id="KW-0808">Transferase</keyword>
<organism>
    <name type="scientific">Shigella sonnei (strain Ss046)</name>
    <dbReference type="NCBI Taxonomy" id="300269"/>
    <lineage>
        <taxon>Bacteria</taxon>
        <taxon>Pseudomonadati</taxon>
        <taxon>Pseudomonadota</taxon>
        <taxon>Gammaproteobacteria</taxon>
        <taxon>Enterobacterales</taxon>
        <taxon>Enterobacteriaceae</taxon>
        <taxon>Shigella</taxon>
    </lineage>
</organism>
<gene>
    <name evidence="1" type="primary">cobT</name>
    <name type="ordered locus">SSON_2052</name>
</gene>